<gene>
    <name evidence="1" type="primary">sthA</name>
    <name evidence="1" type="synonym">udhA</name>
    <name type="ordered locus">SCH_4015</name>
</gene>
<feature type="chain" id="PRO_0000260242" description="Soluble pyridine nucleotide transhydrogenase">
    <location>
        <begin position="1"/>
        <end position="466"/>
    </location>
</feature>
<feature type="binding site" evidence="1">
    <location>
        <begin position="36"/>
        <end position="45"/>
    </location>
    <ligand>
        <name>FAD</name>
        <dbReference type="ChEBI" id="CHEBI:57692"/>
    </ligand>
</feature>
<protein>
    <recommendedName>
        <fullName evidence="1">Soluble pyridine nucleotide transhydrogenase</fullName>
        <shortName evidence="1">STH</shortName>
        <ecNumber evidence="1">1.6.1.1</ecNumber>
    </recommendedName>
    <alternativeName>
        <fullName evidence="1">NAD(P)(+) transhydrogenase [B-specific]</fullName>
    </alternativeName>
</protein>
<sequence>MPHSWDYDAVVIGSGPGGEGAAMGLVKQGARVAVIERYHNVGGGCTHWGTIPSKALRHAVSRIIEFNQNPLYSDHSRLLRSSFADILNHADNVINQQTRMRQGFYERNHCEILQGNAHFIDEHTLALECHDGTVETLTAEKFVIACGSRPYHPSDVDFSHPRIYDSDSILSLHHEPRHVIIYGAGVIGCEYASIFRGMDVKVDLINTRDRLLAFLDQEMSDSLSYHFWNSGVVIRHNEEYEKIEGCDDGVIMHLKSGKKLKADCLLYANGRTGNTDSLALENIGLETDSRGQLKVNSMYQTALPHVYAVGDVIGYPSLASAAYDQGRIAAQALVKGEATAHLIEDIPTGIYTIPEISSVGKTEQQLTAMKVPYEVGRAQFKHLARAQIVGMNVGTLKILFHRETKEILGIHCFGERAAEIIHIGQAIMEQKGGGNTIEYFVNTTFNYPTMAEAYRVAALNGLNRLF</sequence>
<keyword id="KW-0963">Cytoplasm</keyword>
<keyword id="KW-0274">FAD</keyword>
<keyword id="KW-0285">Flavoprotein</keyword>
<keyword id="KW-0520">NAD</keyword>
<keyword id="KW-0521">NADP</keyword>
<keyword id="KW-0560">Oxidoreductase</keyword>
<evidence type="ECO:0000255" key="1">
    <source>
        <dbReference type="HAMAP-Rule" id="MF_00247"/>
    </source>
</evidence>
<accession>Q57H91</accession>
<comment type="function">
    <text evidence="1">Conversion of NADPH, generated by peripheral catabolic pathways, to NADH, which can enter the respiratory chain for energy generation.</text>
</comment>
<comment type="catalytic activity">
    <reaction evidence="1">
        <text>NAD(+) + NADPH = NADH + NADP(+)</text>
        <dbReference type="Rhea" id="RHEA:11692"/>
        <dbReference type="ChEBI" id="CHEBI:57540"/>
        <dbReference type="ChEBI" id="CHEBI:57783"/>
        <dbReference type="ChEBI" id="CHEBI:57945"/>
        <dbReference type="ChEBI" id="CHEBI:58349"/>
        <dbReference type="EC" id="1.6.1.1"/>
    </reaction>
</comment>
<comment type="cofactor">
    <cofactor evidence="1">
        <name>FAD</name>
        <dbReference type="ChEBI" id="CHEBI:57692"/>
    </cofactor>
    <text evidence="1">Binds 1 FAD per subunit.</text>
</comment>
<comment type="subcellular location">
    <subcellularLocation>
        <location evidence="1">Cytoplasm</location>
    </subcellularLocation>
</comment>
<comment type="similarity">
    <text evidence="1">Belongs to the class-I pyridine nucleotide-disulfide oxidoreductase family.</text>
</comment>
<proteinExistence type="inferred from homology"/>
<name>STHA_SALCH</name>
<organism>
    <name type="scientific">Salmonella choleraesuis (strain SC-B67)</name>
    <dbReference type="NCBI Taxonomy" id="321314"/>
    <lineage>
        <taxon>Bacteria</taxon>
        <taxon>Pseudomonadati</taxon>
        <taxon>Pseudomonadota</taxon>
        <taxon>Gammaproteobacteria</taxon>
        <taxon>Enterobacterales</taxon>
        <taxon>Enterobacteriaceae</taxon>
        <taxon>Salmonella</taxon>
    </lineage>
</organism>
<reference key="1">
    <citation type="journal article" date="2005" name="Nucleic Acids Res.">
        <title>The genome sequence of Salmonella enterica serovar Choleraesuis, a highly invasive and resistant zoonotic pathogen.</title>
        <authorList>
            <person name="Chiu C.-H."/>
            <person name="Tang P."/>
            <person name="Chu C."/>
            <person name="Hu S."/>
            <person name="Bao Q."/>
            <person name="Yu J."/>
            <person name="Chou Y.-Y."/>
            <person name="Wang H.-S."/>
            <person name="Lee Y.-S."/>
        </authorList>
    </citation>
    <scope>NUCLEOTIDE SEQUENCE [LARGE SCALE GENOMIC DNA]</scope>
    <source>
        <strain>SC-B67</strain>
    </source>
</reference>
<dbReference type="EC" id="1.6.1.1" evidence="1"/>
<dbReference type="EMBL" id="AE017220">
    <property type="protein sequence ID" value="AAX67921.1"/>
    <property type="molecule type" value="Genomic_DNA"/>
</dbReference>
<dbReference type="RefSeq" id="WP_001120791.1">
    <property type="nucleotide sequence ID" value="NC_006905.1"/>
</dbReference>
<dbReference type="SMR" id="Q57H91"/>
<dbReference type="KEGG" id="sec:SCH_4015"/>
<dbReference type="HOGENOM" id="CLU_016755_0_0_6"/>
<dbReference type="Proteomes" id="UP000000538">
    <property type="component" value="Chromosome"/>
</dbReference>
<dbReference type="GO" id="GO:0005829">
    <property type="term" value="C:cytosol"/>
    <property type="evidence" value="ECO:0007669"/>
    <property type="project" value="TreeGrafter"/>
</dbReference>
<dbReference type="GO" id="GO:0004148">
    <property type="term" value="F:dihydrolipoyl dehydrogenase (NADH) activity"/>
    <property type="evidence" value="ECO:0007669"/>
    <property type="project" value="TreeGrafter"/>
</dbReference>
<dbReference type="GO" id="GO:0050660">
    <property type="term" value="F:flavin adenine dinucleotide binding"/>
    <property type="evidence" value="ECO:0007669"/>
    <property type="project" value="TreeGrafter"/>
</dbReference>
<dbReference type="GO" id="GO:0003957">
    <property type="term" value="F:NAD(P)+ transhydrogenase (Si-specific) activity"/>
    <property type="evidence" value="ECO:0007669"/>
    <property type="project" value="UniProtKB-UniRule"/>
</dbReference>
<dbReference type="GO" id="GO:0006103">
    <property type="term" value="P:2-oxoglutarate metabolic process"/>
    <property type="evidence" value="ECO:0007669"/>
    <property type="project" value="TreeGrafter"/>
</dbReference>
<dbReference type="GO" id="GO:0006739">
    <property type="term" value="P:NADP metabolic process"/>
    <property type="evidence" value="ECO:0007669"/>
    <property type="project" value="UniProtKB-UniRule"/>
</dbReference>
<dbReference type="FunFam" id="3.30.390.30:FF:000002">
    <property type="entry name" value="Soluble pyridine nucleotide transhydrogenase"/>
    <property type="match status" value="1"/>
</dbReference>
<dbReference type="FunFam" id="3.50.50.60:FF:000008">
    <property type="entry name" value="Soluble pyridine nucleotide transhydrogenase"/>
    <property type="match status" value="1"/>
</dbReference>
<dbReference type="Gene3D" id="3.30.390.30">
    <property type="match status" value="1"/>
</dbReference>
<dbReference type="Gene3D" id="3.50.50.60">
    <property type="entry name" value="FAD/NAD(P)-binding domain"/>
    <property type="match status" value="2"/>
</dbReference>
<dbReference type="HAMAP" id="MF_00247">
    <property type="entry name" value="SthA"/>
    <property type="match status" value="1"/>
</dbReference>
<dbReference type="InterPro" id="IPR050151">
    <property type="entry name" value="Class-I_Pyr_Nuc-Dis_Oxidored"/>
</dbReference>
<dbReference type="InterPro" id="IPR036188">
    <property type="entry name" value="FAD/NAD-bd_sf"/>
</dbReference>
<dbReference type="InterPro" id="IPR023753">
    <property type="entry name" value="FAD/NAD-binding_dom"/>
</dbReference>
<dbReference type="InterPro" id="IPR016156">
    <property type="entry name" value="FAD/NAD-linked_Rdtase_dimer_sf"/>
</dbReference>
<dbReference type="InterPro" id="IPR001100">
    <property type="entry name" value="Pyr_nuc-diS_OxRdtase"/>
</dbReference>
<dbReference type="InterPro" id="IPR004099">
    <property type="entry name" value="Pyr_nucl-diS_OxRdtase_dimer"/>
</dbReference>
<dbReference type="InterPro" id="IPR022962">
    <property type="entry name" value="STH_gammaproteobact"/>
</dbReference>
<dbReference type="NCBIfam" id="NF003585">
    <property type="entry name" value="PRK05249.1"/>
    <property type="match status" value="1"/>
</dbReference>
<dbReference type="PANTHER" id="PTHR22912">
    <property type="entry name" value="DISULFIDE OXIDOREDUCTASE"/>
    <property type="match status" value="1"/>
</dbReference>
<dbReference type="PANTHER" id="PTHR22912:SF93">
    <property type="entry name" value="SOLUBLE PYRIDINE NUCLEOTIDE TRANSHYDROGENASE"/>
    <property type="match status" value="1"/>
</dbReference>
<dbReference type="Pfam" id="PF07992">
    <property type="entry name" value="Pyr_redox_2"/>
    <property type="match status" value="1"/>
</dbReference>
<dbReference type="Pfam" id="PF02852">
    <property type="entry name" value="Pyr_redox_dim"/>
    <property type="match status" value="1"/>
</dbReference>
<dbReference type="PIRSF" id="PIRSF000350">
    <property type="entry name" value="Mercury_reductase_MerA"/>
    <property type="match status" value="1"/>
</dbReference>
<dbReference type="PRINTS" id="PR00368">
    <property type="entry name" value="FADPNR"/>
</dbReference>
<dbReference type="PRINTS" id="PR00411">
    <property type="entry name" value="PNDRDTASEI"/>
</dbReference>
<dbReference type="SUPFAM" id="SSF51905">
    <property type="entry name" value="FAD/NAD(P)-binding domain"/>
    <property type="match status" value="1"/>
</dbReference>
<dbReference type="SUPFAM" id="SSF55424">
    <property type="entry name" value="FAD/NAD-linked reductases, dimerisation (C-terminal) domain"/>
    <property type="match status" value="1"/>
</dbReference>